<name>RS16_VIBC3</name>
<gene>
    <name evidence="1" type="primary">rpsP</name>
    <name type="ordered locus">VC0395_A0095</name>
    <name type="ordered locus">VC395_0578</name>
</gene>
<dbReference type="EMBL" id="CP000627">
    <property type="protein sequence ID" value="ABQ21115.1"/>
    <property type="molecule type" value="Genomic_DNA"/>
</dbReference>
<dbReference type="EMBL" id="CP001235">
    <property type="protein sequence ID" value="ACP08597.1"/>
    <property type="molecule type" value="Genomic_DNA"/>
</dbReference>
<dbReference type="RefSeq" id="WP_000256449.1">
    <property type="nucleotide sequence ID" value="NZ_JAACZH010000006.1"/>
</dbReference>
<dbReference type="SMR" id="A5F9A7"/>
<dbReference type="GeneID" id="94014658"/>
<dbReference type="KEGG" id="vco:VC0395_A0095"/>
<dbReference type="KEGG" id="vcr:VC395_0578"/>
<dbReference type="PATRIC" id="fig|345073.21.peg.566"/>
<dbReference type="eggNOG" id="COG0228">
    <property type="taxonomic scope" value="Bacteria"/>
</dbReference>
<dbReference type="HOGENOM" id="CLU_100590_5_1_6"/>
<dbReference type="OrthoDB" id="9807878at2"/>
<dbReference type="Proteomes" id="UP000000249">
    <property type="component" value="Chromosome 2"/>
</dbReference>
<dbReference type="GO" id="GO:0005737">
    <property type="term" value="C:cytoplasm"/>
    <property type="evidence" value="ECO:0007669"/>
    <property type="project" value="UniProtKB-ARBA"/>
</dbReference>
<dbReference type="GO" id="GO:0015935">
    <property type="term" value="C:small ribosomal subunit"/>
    <property type="evidence" value="ECO:0007669"/>
    <property type="project" value="TreeGrafter"/>
</dbReference>
<dbReference type="GO" id="GO:0003735">
    <property type="term" value="F:structural constituent of ribosome"/>
    <property type="evidence" value="ECO:0007669"/>
    <property type="project" value="InterPro"/>
</dbReference>
<dbReference type="GO" id="GO:0006412">
    <property type="term" value="P:translation"/>
    <property type="evidence" value="ECO:0007669"/>
    <property type="project" value="UniProtKB-UniRule"/>
</dbReference>
<dbReference type="FunFam" id="3.30.1320.10:FF:000001">
    <property type="entry name" value="30S ribosomal protein S16"/>
    <property type="match status" value="1"/>
</dbReference>
<dbReference type="Gene3D" id="3.30.1320.10">
    <property type="match status" value="1"/>
</dbReference>
<dbReference type="HAMAP" id="MF_00385">
    <property type="entry name" value="Ribosomal_bS16"/>
    <property type="match status" value="1"/>
</dbReference>
<dbReference type="InterPro" id="IPR000307">
    <property type="entry name" value="Ribosomal_bS16"/>
</dbReference>
<dbReference type="InterPro" id="IPR020592">
    <property type="entry name" value="Ribosomal_bS16_CS"/>
</dbReference>
<dbReference type="InterPro" id="IPR023803">
    <property type="entry name" value="Ribosomal_bS16_dom_sf"/>
</dbReference>
<dbReference type="NCBIfam" id="TIGR00002">
    <property type="entry name" value="S16"/>
    <property type="match status" value="1"/>
</dbReference>
<dbReference type="PANTHER" id="PTHR12919">
    <property type="entry name" value="30S RIBOSOMAL PROTEIN S16"/>
    <property type="match status" value="1"/>
</dbReference>
<dbReference type="PANTHER" id="PTHR12919:SF20">
    <property type="entry name" value="SMALL RIBOSOMAL SUBUNIT PROTEIN BS16M"/>
    <property type="match status" value="1"/>
</dbReference>
<dbReference type="Pfam" id="PF00886">
    <property type="entry name" value="Ribosomal_S16"/>
    <property type="match status" value="1"/>
</dbReference>
<dbReference type="SUPFAM" id="SSF54565">
    <property type="entry name" value="Ribosomal protein S16"/>
    <property type="match status" value="1"/>
</dbReference>
<dbReference type="PROSITE" id="PS00732">
    <property type="entry name" value="RIBOSOMAL_S16"/>
    <property type="match status" value="1"/>
</dbReference>
<accession>A5F9A7</accession>
<accession>C3LX87</accession>
<organism>
    <name type="scientific">Vibrio cholerae serotype O1 (strain ATCC 39541 / Classical Ogawa 395 / O395)</name>
    <dbReference type="NCBI Taxonomy" id="345073"/>
    <lineage>
        <taxon>Bacteria</taxon>
        <taxon>Pseudomonadati</taxon>
        <taxon>Pseudomonadota</taxon>
        <taxon>Gammaproteobacteria</taxon>
        <taxon>Vibrionales</taxon>
        <taxon>Vibrionaceae</taxon>
        <taxon>Vibrio</taxon>
    </lineage>
</organism>
<comment type="similarity">
    <text evidence="1">Belongs to the bacterial ribosomal protein bS16 family.</text>
</comment>
<protein>
    <recommendedName>
        <fullName evidence="1">Small ribosomal subunit protein bS16</fullName>
    </recommendedName>
    <alternativeName>
        <fullName evidence="2">30S ribosomal protein S16</fullName>
    </alternativeName>
</protein>
<keyword id="KW-0687">Ribonucleoprotein</keyword>
<keyword id="KW-0689">Ribosomal protein</keyword>
<evidence type="ECO:0000255" key="1">
    <source>
        <dbReference type="HAMAP-Rule" id="MF_00385"/>
    </source>
</evidence>
<evidence type="ECO:0000305" key="2"/>
<sequence>MVTIRLARHGAKKRPFYQIVVADSRNSATGRFIEKVGFFNPTATGQEEGLRLDLDRVNHWVSQGASLSDRVAQLVKTAQKAA</sequence>
<feature type="chain" id="PRO_1000072200" description="Small ribosomal subunit protein bS16">
    <location>
        <begin position="1"/>
        <end position="82"/>
    </location>
</feature>
<proteinExistence type="inferred from homology"/>
<reference key="1">
    <citation type="submission" date="2007-03" db="EMBL/GenBank/DDBJ databases">
        <authorList>
            <person name="Heidelberg J."/>
        </authorList>
    </citation>
    <scope>NUCLEOTIDE SEQUENCE [LARGE SCALE GENOMIC DNA]</scope>
    <source>
        <strain>ATCC 39541 / Classical Ogawa 395 / O395</strain>
    </source>
</reference>
<reference key="2">
    <citation type="journal article" date="2008" name="PLoS ONE">
        <title>A recalibrated molecular clock and independent origins for the cholera pandemic clones.</title>
        <authorList>
            <person name="Feng L."/>
            <person name="Reeves P.R."/>
            <person name="Lan R."/>
            <person name="Ren Y."/>
            <person name="Gao C."/>
            <person name="Zhou Z."/>
            <person name="Ren Y."/>
            <person name="Cheng J."/>
            <person name="Wang W."/>
            <person name="Wang J."/>
            <person name="Qian W."/>
            <person name="Li D."/>
            <person name="Wang L."/>
        </authorList>
    </citation>
    <scope>NUCLEOTIDE SEQUENCE [LARGE SCALE GENOMIC DNA]</scope>
    <source>
        <strain>ATCC 39541 / Classical Ogawa 395 / O395</strain>
    </source>
</reference>